<comment type="function">
    <text evidence="1">Has a dual role in the assembly of mitochondrial ATPase. Acts as a protease that removes N-terminal residues of mitochondrial ATPase CF(0) subunit 6 at the intermembrane space side. Also involved in the correct assembly of the membrane-embedded ATPase CF(0) particle, probably mediating association of subunit 6 with the subunit 9 ring (By similarity).</text>
</comment>
<comment type="subcellular location">
    <subcellularLocation>
        <location>Mitochondrion inner membrane</location>
        <topology>Peripheral membrane protein</topology>
        <orientation>Intermembrane side</orientation>
    </subcellularLocation>
    <text evidence="1">Associates loosely with the inner membrane.</text>
</comment>
<comment type="similarity">
    <text evidence="3">Belongs to the peptidase M76 family.</text>
</comment>
<dbReference type="EC" id="3.4.24.-"/>
<dbReference type="EMBL" id="CH981526">
    <property type="protein sequence ID" value="EDK44239.1"/>
    <property type="molecule type" value="Genomic_DNA"/>
</dbReference>
<dbReference type="RefSeq" id="XP_001525860.1">
    <property type="nucleotide sequence ID" value="XM_001525810.1"/>
</dbReference>
<dbReference type="FunCoup" id="A5DYI1">
    <property type="interactions" value="474"/>
</dbReference>
<dbReference type="STRING" id="379508.A5DYI1"/>
<dbReference type="MEROPS" id="M76.002"/>
<dbReference type="GeneID" id="5233285"/>
<dbReference type="KEGG" id="lel:PVL30_003263"/>
<dbReference type="VEuPathDB" id="FungiDB:LELG_02418"/>
<dbReference type="eggNOG" id="KOG3314">
    <property type="taxonomic scope" value="Eukaryota"/>
</dbReference>
<dbReference type="HOGENOM" id="CLU_079125_0_0_1"/>
<dbReference type="InParanoid" id="A5DYI1"/>
<dbReference type="OMA" id="EAHQNCV"/>
<dbReference type="OrthoDB" id="285308at2759"/>
<dbReference type="Proteomes" id="UP000001996">
    <property type="component" value="Unassembled WGS sequence"/>
</dbReference>
<dbReference type="GO" id="GO:0005743">
    <property type="term" value="C:mitochondrial inner membrane"/>
    <property type="evidence" value="ECO:0007669"/>
    <property type="project" value="UniProtKB-SubCell"/>
</dbReference>
<dbReference type="GO" id="GO:0046872">
    <property type="term" value="F:metal ion binding"/>
    <property type="evidence" value="ECO:0007669"/>
    <property type="project" value="UniProtKB-KW"/>
</dbReference>
<dbReference type="GO" id="GO:0004222">
    <property type="term" value="F:metalloendopeptidase activity"/>
    <property type="evidence" value="ECO:0007669"/>
    <property type="project" value="InterPro"/>
</dbReference>
<dbReference type="GO" id="GO:0034982">
    <property type="term" value="P:mitochondrial protein processing"/>
    <property type="evidence" value="ECO:0007669"/>
    <property type="project" value="TreeGrafter"/>
</dbReference>
<dbReference type="GO" id="GO:0033615">
    <property type="term" value="P:mitochondrial proton-transporting ATP synthase complex assembly"/>
    <property type="evidence" value="ECO:0007669"/>
    <property type="project" value="TreeGrafter"/>
</dbReference>
<dbReference type="InterPro" id="IPR019165">
    <property type="entry name" value="Peptidase_M76_ATP23"/>
</dbReference>
<dbReference type="PANTHER" id="PTHR21711">
    <property type="entry name" value="MITOCHONDRIAL INNER MEMBRANE PROTEASE"/>
    <property type="match status" value="1"/>
</dbReference>
<dbReference type="PANTHER" id="PTHR21711:SF0">
    <property type="entry name" value="MITOCHONDRIAL INNER MEMBRANE PROTEASE ATP23 HOMOLOG"/>
    <property type="match status" value="1"/>
</dbReference>
<dbReference type="Pfam" id="PF09768">
    <property type="entry name" value="Peptidase_M76"/>
    <property type="match status" value="1"/>
</dbReference>
<dbReference type="PROSITE" id="PS00142">
    <property type="entry name" value="ZINC_PROTEASE"/>
    <property type="match status" value="1"/>
</dbReference>
<accession>A5DYI1</accession>
<sequence length="241" mass="28012">MSSSTQPAQTSPSPSKITLSADSQLNGFEWWRRSLQYQTGLGLTPSEKAQYEYDYFHRNLDQKCDTCNDHLKWVLAYSPSVRFMMDHIQKLNKSNEPVPRNKIVCQTCDFTKGGGFDPNHGIVLCSNYIRSKWQLEDILAHELVHVYDYMKFNVNMLDLRQHACTEIRASMLSGECRVWNEMKKTGMGNFGKKFQECIRRRAVLSVEANPVCKSREEAEKAVDVVWKSCFNDTRPFERVYR</sequence>
<gene>
    <name type="primary">ATP23</name>
    <name type="ORF">LELG_02418</name>
</gene>
<reference key="1">
    <citation type="journal article" date="2009" name="Nature">
        <title>Evolution of pathogenicity and sexual reproduction in eight Candida genomes.</title>
        <authorList>
            <person name="Butler G."/>
            <person name="Rasmussen M.D."/>
            <person name="Lin M.F."/>
            <person name="Santos M.A.S."/>
            <person name="Sakthikumar S."/>
            <person name="Munro C.A."/>
            <person name="Rheinbay E."/>
            <person name="Grabherr M."/>
            <person name="Forche A."/>
            <person name="Reedy J.L."/>
            <person name="Agrafioti I."/>
            <person name="Arnaud M.B."/>
            <person name="Bates S."/>
            <person name="Brown A.J.P."/>
            <person name="Brunke S."/>
            <person name="Costanzo M.C."/>
            <person name="Fitzpatrick D.A."/>
            <person name="de Groot P.W.J."/>
            <person name="Harris D."/>
            <person name="Hoyer L.L."/>
            <person name="Hube B."/>
            <person name="Klis F.M."/>
            <person name="Kodira C."/>
            <person name="Lennard N."/>
            <person name="Logue M.E."/>
            <person name="Martin R."/>
            <person name="Neiman A.M."/>
            <person name="Nikolaou E."/>
            <person name="Quail M.A."/>
            <person name="Quinn J."/>
            <person name="Santos M.C."/>
            <person name="Schmitzberger F.F."/>
            <person name="Sherlock G."/>
            <person name="Shah P."/>
            <person name="Silverstein K.A.T."/>
            <person name="Skrzypek M.S."/>
            <person name="Soll D."/>
            <person name="Staggs R."/>
            <person name="Stansfield I."/>
            <person name="Stumpf M.P.H."/>
            <person name="Sudbery P.E."/>
            <person name="Srikantha T."/>
            <person name="Zeng Q."/>
            <person name="Berman J."/>
            <person name="Berriman M."/>
            <person name="Heitman J."/>
            <person name="Gow N.A.R."/>
            <person name="Lorenz M.C."/>
            <person name="Birren B.W."/>
            <person name="Kellis M."/>
            <person name="Cuomo C.A."/>
        </authorList>
    </citation>
    <scope>NUCLEOTIDE SEQUENCE [LARGE SCALE GENOMIC DNA]</scope>
    <source>
        <strain>ATCC 11503 / BCRC 21390 / CBS 2605 / JCM 1781 / NBRC 1676 / NRRL YB-4239</strain>
    </source>
</reference>
<protein>
    <recommendedName>
        <fullName>Mitochondrial inner membrane protease ATP23</fullName>
        <ecNumber>3.4.24.-</ecNumber>
    </recommendedName>
</protein>
<evidence type="ECO:0000250" key="1"/>
<evidence type="ECO:0000255" key="2">
    <source>
        <dbReference type="PROSITE-ProRule" id="PRU10095"/>
    </source>
</evidence>
<evidence type="ECO:0000305" key="3"/>
<keyword id="KW-0378">Hydrolase</keyword>
<keyword id="KW-0472">Membrane</keyword>
<keyword id="KW-0479">Metal-binding</keyword>
<keyword id="KW-0482">Metalloprotease</keyword>
<keyword id="KW-0496">Mitochondrion</keyword>
<keyword id="KW-0999">Mitochondrion inner membrane</keyword>
<keyword id="KW-0645">Protease</keyword>
<keyword id="KW-1185">Reference proteome</keyword>
<organism>
    <name type="scientific">Lodderomyces elongisporus (strain ATCC 11503 / CBS 2605 / JCM 1781 / NBRC 1676 / NRRL YB-4239)</name>
    <name type="common">Yeast</name>
    <name type="synonym">Saccharomyces elongisporus</name>
    <dbReference type="NCBI Taxonomy" id="379508"/>
    <lineage>
        <taxon>Eukaryota</taxon>
        <taxon>Fungi</taxon>
        <taxon>Dikarya</taxon>
        <taxon>Ascomycota</taxon>
        <taxon>Saccharomycotina</taxon>
        <taxon>Pichiomycetes</taxon>
        <taxon>Debaryomycetaceae</taxon>
        <taxon>Candida/Lodderomyces clade</taxon>
        <taxon>Lodderomyces</taxon>
    </lineage>
</organism>
<proteinExistence type="inferred from homology"/>
<feature type="chain" id="PRO_0000330065" description="Mitochondrial inner membrane protease ATP23">
    <location>
        <begin position="1"/>
        <end position="241"/>
    </location>
</feature>
<feature type="active site" evidence="2">
    <location>
        <position position="142"/>
    </location>
</feature>
<feature type="binding site" evidence="1">
    <location>
        <position position="141"/>
    </location>
    <ligand>
        <name>a divalent metal cation</name>
        <dbReference type="ChEBI" id="CHEBI:60240"/>
        <note>catalytic</note>
    </ligand>
</feature>
<feature type="binding site" evidence="1">
    <location>
        <position position="145"/>
    </location>
    <ligand>
        <name>a divalent metal cation</name>
        <dbReference type="ChEBI" id="CHEBI:60240"/>
        <note>catalytic</note>
    </ligand>
</feature>
<name>ATP23_LODEL</name>